<name>VEX1_XENTR</name>
<proteinExistence type="inferred from homology"/>
<gene>
    <name evidence="3" type="primary">vex1</name>
</gene>
<protein>
    <recommendedName>
        <fullName>Homeobox protein vex1</fullName>
    </recommendedName>
    <alternativeName>
        <fullName>Homeodomain transcription factor vex-1</fullName>
    </alternativeName>
    <alternativeName>
        <fullName>Ventral homeobox protein</fullName>
    </alternativeName>
</protein>
<feature type="chain" id="PRO_0000279726" description="Homeobox protein vex1">
    <location>
        <begin position="1"/>
        <end position="282"/>
    </location>
</feature>
<feature type="DNA-binding region" description="Homeobox" evidence="2">
    <location>
        <begin position="129"/>
        <end position="188"/>
    </location>
</feature>
<accession>Q6F2E2</accession>
<sequence>MEKRPYSVAWLSESSQRKPLCTNVDLLGYKSGNPDLPPNREYNVSLPSRVILPTPDYREKENYCGRNVHNGERSPPVRDQLHFHPAPQELTTSRRTSIEVSAESSTDQRVIGMTDTNKKTISVCDEDAASRARTKFTAEQLEELEKSFKENRYIGSSEKRRLSKVLKLSENQIKTWFQNRRMKFKRQTQDARVEAFFSGLYLPYYGYPDLPTPGYSVQSEFPVLAPQTMAASSIPFGPLHSTVMSPGLHPAIPSANLGSYPCSSMLVRPILNEPTRQRYSPY</sequence>
<comment type="function">
    <text evidence="1">Transcriptional repressor. Acts in a ventral signaling pathway downstream of bmp4 to antagonize the Spemann organizer and ventrally pattern the embryonic mesoderm. Represses transcription of the dorsal genes gsc and otx2 (By similarity).</text>
</comment>
<comment type="subcellular location">
    <subcellularLocation>
        <location evidence="4">Nucleus</location>
    </subcellularLocation>
</comment>
<organism>
    <name type="scientific">Xenopus tropicalis</name>
    <name type="common">Western clawed frog</name>
    <name type="synonym">Silurana tropicalis</name>
    <dbReference type="NCBI Taxonomy" id="8364"/>
    <lineage>
        <taxon>Eukaryota</taxon>
        <taxon>Metazoa</taxon>
        <taxon>Chordata</taxon>
        <taxon>Craniata</taxon>
        <taxon>Vertebrata</taxon>
        <taxon>Euteleostomi</taxon>
        <taxon>Amphibia</taxon>
        <taxon>Batrachia</taxon>
        <taxon>Anura</taxon>
        <taxon>Pipoidea</taxon>
        <taxon>Pipidae</taxon>
        <taxon>Xenopodinae</taxon>
        <taxon>Xenopus</taxon>
        <taxon>Silurana</taxon>
    </lineage>
</organism>
<evidence type="ECO:0000250" key="1">
    <source>
        <dbReference type="UniProtKB" id="Q9W769"/>
    </source>
</evidence>
<evidence type="ECO:0000255" key="2">
    <source>
        <dbReference type="PROSITE-ProRule" id="PRU00108"/>
    </source>
</evidence>
<evidence type="ECO:0000303" key="3">
    <source ref="1"/>
</evidence>
<evidence type="ECO:0000305" key="4"/>
<evidence type="ECO:0000312" key="5">
    <source>
        <dbReference type="EMBL" id="AAT72004.1"/>
    </source>
</evidence>
<dbReference type="EMBL" id="AC149072">
    <property type="protein sequence ID" value="AAT72004.1"/>
    <property type="molecule type" value="Genomic_DNA"/>
</dbReference>
<dbReference type="SMR" id="Q6F2E2"/>
<dbReference type="STRING" id="8364.ENSXETP00000031083"/>
<dbReference type="PaxDb" id="8364-ENSXETP00000058808"/>
<dbReference type="eggNOG" id="ENOG502SDSB">
    <property type="taxonomic scope" value="Eukaryota"/>
</dbReference>
<dbReference type="InParanoid" id="Q6F2E2"/>
<dbReference type="Proteomes" id="UP000008143">
    <property type="component" value="Unplaced"/>
</dbReference>
<dbReference type="GO" id="GO:0005634">
    <property type="term" value="C:nucleus"/>
    <property type="evidence" value="ECO:0007669"/>
    <property type="project" value="UniProtKB-SubCell"/>
</dbReference>
<dbReference type="GO" id="GO:0003677">
    <property type="term" value="F:DNA binding"/>
    <property type="evidence" value="ECO:0007669"/>
    <property type="project" value="UniProtKB-KW"/>
</dbReference>
<dbReference type="GO" id="GO:0000981">
    <property type="term" value="F:DNA-binding transcription factor activity, RNA polymerase II-specific"/>
    <property type="evidence" value="ECO:0007669"/>
    <property type="project" value="InterPro"/>
</dbReference>
<dbReference type="GO" id="GO:0030509">
    <property type="term" value="P:BMP signaling pathway"/>
    <property type="evidence" value="ECO:0000250"/>
    <property type="project" value="UniProtKB"/>
</dbReference>
<dbReference type="GO" id="GO:0048264">
    <property type="term" value="P:determination of ventral identity"/>
    <property type="evidence" value="ECO:0000250"/>
    <property type="project" value="UniProtKB"/>
</dbReference>
<dbReference type="GO" id="GO:0045892">
    <property type="term" value="P:negative regulation of DNA-templated transcription"/>
    <property type="evidence" value="ECO:0000250"/>
    <property type="project" value="UniProtKB"/>
</dbReference>
<dbReference type="GO" id="GO:0000122">
    <property type="term" value="P:negative regulation of transcription by RNA polymerase II"/>
    <property type="evidence" value="ECO:0000250"/>
    <property type="project" value="UniProtKB"/>
</dbReference>
<dbReference type="CDD" id="cd00086">
    <property type="entry name" value="homeodomain"/>
    <property type="match status" value="1"/>
</dbReference>
<dbReference type="FunFam" id="1.10.10.60:FF:000724">
    <property type="entry name" value="Homeobox protein vex1"/>
    <property type="match status" value="1"/>
</dbReference>
<dbReference type="Gene3D" id="1.10.10.60">
    <property type="entry name" value="Homeodomain-like"/>
    <property type="match status" value="1"/>
</dbReference>
<dbReference type="InterPro" id="IPR001356">
    <property type="entry name" value="HD"/>
</dbReference>
<dbReference type="InterPro" id="IPR017970">
    <property type="entry name" value="Homeobox_CS"/>
</dbReference>
<dbReference type="InterPro" id="IPR050848">
    <property type="entry name" value="Homeobox_TF"/>
</dbReference>
<dbReference type="InterPro" id="IPR009057">
    <property type="entry name" value="Homeodomain-like_sf"/>
</dbReference>
<dbReference type="PANTHER" id="PTHR24333">
    <property type="entry name" value="HOMEO BOX HB9 LIKE A-RELATED"/>
    <property type="match status" value="1"/>
</dbReference>
<dbReference type="PANTHER" id="PTHR24333:SF14">
    <property type="entry name" value="HOMEOBOX DOMAIN-CONTAINING PROTEIN"/>
    <property type="match status" value="1"/>
</dbReference>
<dbReference type="Pfam" id="PF00046">
    <property type="entry name" value="Homeodomain"/>
    <property type="match status" value="1"/>
</dbReference>
<dbReference type="SMART" id="SM00389">
    <property type="entry name" value="HOX"/>
    <property type="match status" value="1"/>
</dbReference>
<dbReference type="SUPFAM" id="SSF46689">
    <property type="entry name" value="Homeodomain-like"/>
    <property type="match status" value="1"/>
</dbReference>
<dbReference type="PROSITE" id="PS00027">
    <property type="entry name" value="HOMEOBOX_1"/>
    <property type="match status" value="1"/>
</dbReference>
<dbReference type="PROSITE" id="PS50071">
    <property type="entry name" value="HOMEOBOX_2"/>
    <property type="match status" value="1"/>
</dbReference>
<keyword id="KW-0217">Developmental protein</keyword>
<keyword id="KW-0238">DNA-binding</keyword>
<keyword id="KW-0371">Homeobox</keyword>
<keyword id="KW-0539">Nucleus</keyword>
<keyword id="KW-1185">Reference proteome</keyword>
<keyword id="KW-0804">Transcription</keyword>
<keyword id="KW-0805">Transcription regulation</keyword>
<reference evidence="5" key="1">
    <citation type="submission" date="2004-07" db="EMBL/GenBank/DDBJ databases">
        <title>Sequence of Xenopus tropicalis development genes.</title>
        <authorList>
            <person name="Qin S."/>
            <person name="Dors M."/>
            <person name="Johnson E."/>
            <person name="Bloom S."/>
            <person name="Hood L."/>
            <person name="Rowen L."/>
        </authorList>
    </citation>
    <scope>NUCLEOTIDE SEQUENCE [GENOMIC DNA]</scope>
</reference>